<reference key="1">
    <citation type="journal article" date="2000" name="Science">
        <title>Complete genome sequence of Neisseria meningitidis serogroup B strain MC58.</title>
        <authorList>
            <person name="Tettelin H."/>
            <person name="Saunders N.J."/>
            <person name="Heidelberg J.F."/>
            <person name="Jeffries A.C."/>
            <person name="Nelson K.E."/>
            <person name="Eisen J.A."/>
            <person name="Ketchum K.A."/>
            <person name="Hood D.W."/>
            <person name="Peden J.F."/>
            <person name="Dodson R.J."/>
            <person name="Nelson W.C."/>
            <person name="Gwinn M.L."/>
            <person name="DeBoy R.T."/>
            <person name="Peterson J.D."/>
            <person name="Hickey E.K."/>
            <person name="Haft D.H."/>
            <person name="Salzberg S.L."/>
            <person name="White O."/>
            <person name="Fleischmann R.D."/>
            <person name="Dougherty B.A."/>
            <person name="Mason T.M."/>
            <person name="Ciecko A."/>
            <person name="Parksey D.S."/>
            <person name="Blair E."/>
            <person name="Cittone H."/>
            <person name="Clark E.B."/>
            <person name="Cotton M.D."/>
            <person name="Utterback T.R."/>
            <person name="Khouri H.M."/>
            <person name="Qin H."/>
            <person name="Vamathevan J.J."/>
            <person name="Gill J."/>
            <person name="Scarlato V."/>
            <person name="Masignani V."/>
            <person name="Pizza M."/>
            <person name="Grandi G."/>
            <person name="Sun L."/>
            <person name="Smith H.O."/>
            <person name="Fraser C.M."/>
            <person name="Moxon E.R."/>
            <person name="Rappuoli R."/>
            <person name="Venter J.C."/>
        </authorList>
    </citation>
    <scope>NUCLEOTIDE SEQUENCE [LARGE SCALE GENOMIC DNA]</scope>
    <source>
        <strain>ATCC BAA-335 / MC58</strain>
    </source>
</reference>
<name>GLK_NEIMB</name>
<protein>
    <recommendedName>
        <fullName evidence="1">Glucokinase</fullName>
        <ecNumber evidence="1">2.7.1.2</ecNumber>
    </recommendedName>
    <alternativeName>
        <fullName evidence="1">Glucose kinase</fullName>
    </alternativeName>
</protein>
<sequence>MSSTPNKQAGYPRLVADIGGTNARFALETAPRVIEKAAVLPCKDYDTVTDAVRAYLNQSGATAVRHAAFAIANPILGDWVQMTNHHWAFSIETTRQTLGLDTLILLNDFTAQALAVTQTSSKDLMQVGGQKPVEFAPKAVIGPGTGLGVSGLVHSHAGWVALAGEGGHTSFPPFDDMEVLIWQYAKNKYGHVSAERFLSGAGLSLVYEALAAKQKAKPAKLMPSEITEKALSGASPLCRQTLDIFCAMLGTVASNLALTLGARGGVYLCGGIIPRVLEYFKTSPFRSRFENKGRFEAYLAAIPVYVVLSEFPGISGAAAALDNHLRNV</sequence>
<proteinExistence type="inferred from homology"/>
<evidence type="ECO:0000255" key="1">
    <source>
        <dbReference type="HAMAP-Rule" id="MF_00524"/>
    </source>
</evidence>
<accession>P64254</accession>
<accession>Q9JQX3</accession>
<dbReference type="EC" id="2.7.1.2" evidence="1"/>
<dbReference type="EMBL" id="AE002098">
    <property type="protein sequence ID" value="AAF41754.1"/>
    <property type="molecule type" value="Genomic_DNA"/>
</dbReference>
<dbReference type="PIR" id="E81089">
    <property type="entry name" value="E81089"/>
</dbReference>
<dbReference type="RefSeq" id="NP_274404.1">
    <property type="nucleotide sequence ID" value="NC_003112.2"/>
</dbReference>
<dbReference type="RefSeq" id="WP_002216974.1">
    <property type="nucleotide sequence ID" value="NC_003112.2"/>
</dbReference>
<dbReference type="SMR" id="P64254"/>
<dbReference type="FunCoup" id="P64254">
    <property type="interactions" value="194"/>
</dbReference>
<dbReference type="STRING" id="122586.NMB1390"/>
<dbReference type="PaxDb" id="122586-NMB1390"/>
<dbReference type="KEGG" id="nme:NMB1390"/>
<dbReference type="PATRIC" id="fig|122586.8.peg.1743"/>
<dbReference type="HOGENOM" id="CLU_042582_1_0_4"/>
<dbReference type="InParanoid" id="P64254"/>
<dbReference type="OrthoDB" id="257751at2"/>
<dbReference type="Proteomes" id="UP000000425">
    <property type="component" value="Chromosome"/>
</dbReference>
<dbReference type="GO" id="GO:0005829">
    <property type="term" value="C:cytosol"/>
    <property type="evidence" value="ECO:0000318"/>
    <property type="project" value="GO_Central"/>
</dbReference>
<dbReference type="GO" id="GO:0005524">
    <property type="term" value="F:ATP binding"/>
    <property type="evidence" value="ECO:0007669"/>
    <property type="project" value="UniProtKB-UniRule"/>
</dbReference>
<dbReference type="GO" id="GO:0005536">
    <property type="term" value="F:D-glucose binding"/>
    <property type="evidence" value="ECO:0007669"/>
    <property type="project" value="InterPro"/>
</dbReference>
<dbReference type="GO" id="GO:0004340">
    <property type="term" value="F:glucokinase activity"/>
    <property type="evidence" value="ECO:0000318"/>
    <property type="project" value="GO_Central"/>
</dbReference>
<dbReference type="GO" id="GO:0006096">
    <property type="term" value="P:glycolytic process"/>
    <property type="evidence" value="ECO:0007669"/>
    <property type="project" value="UniProtKB-UniRule"/>
</dbReference>
<dbReference type="CDD" id="cd24008">
    <property type="entry name" value="ASKHA_NBD_GLK"/>
    <property type="match status" value="1"/>
</dbReference>
<dbReference type="FunFam" id="3.40.367.20:FF:000002">
    <property type="entry name" value="Glucokinase"/>
    <property type="match status" value="1"/>
</dbReference>
<dbReference type="Gene3D" id="3.30.420.40">
    <property type="match status" value="1"/>
</dbReference>
<dbReference type="Gene3D" id="3.40.367.20">
    <property type="match status" value="1"/>
</dbReference>
<dbReference type="HAMAP" id="MF_00524">
    <property type="entry name" value="Glucokinase"/>
    <property type="match status" value="1"/>
</dbReference>
<dbReference type="InterPro" id="IPR043129">
    <property type="entry name" value="ATPase_NBD"/>
</dbReference>
<dbReference type="InterPro" id="IPR050201">
    <property type="entry name" value="Bacterial_glucokinase"/>
</dbReference>
<dbReference type="InterPro" id="IPR003836">
    <property type="entry name" value="Glucokinase"/>
</dbReference>
<dbReference type="NCBIfam" id="TIGR00749">
    <property type="entry name" value="glk"/>
    <property type="match status" value="1"/>
</dbReference>
<dbReference type="NCBIfam" id="NF001416">
    <property type="entry name" value="PRK00292.1-3"/>
    <property type="match status" value="1"/>
</dbReference>
<dbReference type="PANTHER" id="PTHR47690">
    <property type="entry name" value="GLUCOKINASE"/>
    <property type="match status" value="1"/>
</dbReference>
<dbReference type="PANTHER" id="PTHR47690:SF1">
    <property type="entry name" value="GLUCOKINASE"/>
    <property type="match status" value="1"/>
</dbReference>
<dbReference type="Pfam" id="PF02685">
    <property type="entry name" value="Glucokinase"/>
    <property type="match status" value="1"/>
</dbReference>
<dbReference type="SUPFAM" id="SSF53067">
    <property type="entry name" value="Actin-like ATPase domain"/>
    <property type="match status" value="1"/>
</dbReference>
<comment type="catalytic activity">
    <reaction evidence="1">
        <text>D-glucose + ATP = D-glucose 6-phosphate + ADP + H(+)</text>
        <dbReference type="Rhea" id="RHEA:17825"/>
        <dbReference type="ChEBI" id="CHEBI:4167"/>
        <dbReference type="ChEBI" id="CHEBI:15378"/>
        <dbReference type="ChEBI" id="CHEBI:30616"/>
        <dbReference type="ChEBI" id="CHEBI:61548"/>
        <dbReference type="ChEBI" id="CHEBI:456216"/>
        <dbReference type="EC" id="2.7.1.2"/>
    </reaction>
</comment>
<comment type="subcellular location">
    <subcellularLocation>
        <location evidence="1">Cytoplasm</location>
    </subcellularLocation>
</comment>
<comment type="similarity">
    <text evidence="1">Belongs to the bacterial glucokinase family.</text>
</comment>
<keyword id="KW-0067">ATP-binding</keyword>
<keyword id="KW-0963">Cytoplasm</keyword>
<keyword id="KW-0324">Glycolysis</keyword>
<keyword id="KW-0418">Kinase</keyword>
<keyword id="KW-0547">Nucleotide-binding</keyword>
<keyword id="KW-1185">Reference proteome</keyword>
<keyword id="KW-0808">Transferase</keyword>
<feature type="chain" id="PRO_0000215131" description="Glucokinase">
    <location>
        <begin position="1"/>
        <end position="328"/>
    </location>
</feature>
<feature type="binding site" evidence="1">
    <location>
        <begin position="16"/>
        <end position="21"/>
    </location>
    <ligand>
        <name>ATP</name>
        <dbReference type="ChEBI" id="CHEBI:30616"/>
    </ligand>
</feature>
<gene>
    <name evidence="1" type="primary">glk</name>
    <name type="ordered locus">NMB1390</name>
</gene>
<organism>
    <name type="scientific">Neisseria meningitidis serogroup B (strain ATCC BAA-335 / MC58)</name>
    <dbReference type="NCBI Taxonomy" id="122586"/>
    <lineage>
        <taxon>Bacteria</taxon>
        <taxon>Pseudomonadati</taxon>
        <taxon>Pseudomonadota</taxon>
        <taxon>Betaproteobacteria</taxon>
        <taxon>Neisseriales</taxon>
        <taxon>Neisseriaceae</taxon>
        <taxon>Neisseria</taxon>
    </lineage>
</organism>